<gene>
    <name type="primary">MTC3</name>
    <name type="ordered locus">YGL226W</name>
</gene>
<reference key="1">
    <citation type="journal article" date="1997" name="Nature">
        <title>The nucleotide sequence of Saccharomyces cerevisiae chromosome VII.</title>
        <authorList>
            <person name="Tettelin H."/>
            <person name="Agostoni-Carbone M.L."/>
            <person name="Albermann K."/>
            <person name="Albers M."/>
            <person name="Arroyo J."/>
            <person name="Backes U."/>
            <person name="Barreiros T."/>
            <person name="Bertani I."/>
            <person name="Bjourson A.J."/>
            <person name="Brueckner M."/>
            <person name="Bruschi C.V."/>
            <person name="Carignani G."/>
            <person name="Castagnoli L."/>
            <person name="Cerdan E."/>
            <person name="Clemente M.L."/>
            <person name="Coblenz A."/>
            <person name="Coglievina M."/>
            <person name="Coissac E."/>
            <person name="Defoor E."/>
            <person name="Del Bino S."/>
            <person name="Delius H."/>
            <person name="Delneri D."/>
            <person name="de Wergifosse P."/>
            <person name="Dujon B."/>
            <person name="Durand P."/>
            <person name="Entian K.-D."/>
            <person name="Eraso P."/>
            <person name="Escribano V."/>
            <person name="Fabiani L."/>
            <person name="Fartmann B."/>
            <person name="Feroli F."/>
            <person name="Feuermann M."/>
            <person name="Frontali L."/>
            <person name="Garcia-Gonzalez M."/>
            <person name="Garcia-Saez M.I."/>
            <person name="Goffeau A."/>
            <person name="Guerreiro P."/>
            <person name="Hani J."/>
            <person name="Hansen M."/>
            <person name="Hebling U."/>
            <person name="Hernandez K."/>
            <person name="Heumann K."/>
            <person name="Hilger F."/>
            <person name="Hofmann B."/>
            <person name="Indge K.J."/>
            <person name="James C.M."/>
            <person name="Klima R."/>
            <person name="Koetter P."/>
            <person name="Kramer B."/>
            <person name="Kramer W."/>
            <person name="Lauquin G."/>
            <person name="Leuther H."/>
            <person name="Louis E.J."/>
            <person name="Maillier E."/>
            <person name="Marconi A."/>
            <person name="Martegani E."/>
            <person name="Mazon M.J."/>
            <person name="Mazzoni C."/>
            <person name="McReynolds A.D.K."/>
            <person name="Melchioretto P."/>
            <person name="Mewes H.-W."/>
            <person name="Minenkova O."/>
            <person name="Mueller-Auer S."/>
            <person name="Nawrocki A."/>
            <person name="Netter P."/>
            <person name="Neu R."/>
            <person name="Nombela C."/>
            <person name="Oliver S.G."/>
            <person name="Panzeri L."/>
            <person name="Paoluzi S."/>
            <person name="Plevani P."/>
            <person name="Portetelle D."/>
            <person name="Portillo F."/>
            <person name="Potier S."/>
            <person name="Purnelle B."/>
            <person name="Rieger M."/>
            <person name="Riles L."/>
            <person name="Rinaldi T."/>
            <person name="Robben J."/>
            <person name="Rodrigues-Pousada C."/>
            <person name="Rodriguez-Belmonte E."/>
            <person name="Rodriguez-Torres A.M."/>
            <person name="Rose M."/>
            <person name="Ruzzi M."/>
            <person name="Saliola M."/>
            <person name="Sanchez-Perez M."/>
            <person name="Schaefer B."/>
            <person name="Schaefer M."/>
            <person name="Scharfe M."/>
            <person name="Schmidheini T."/>
            <person name="Schreer A."/>
            <person name="Skala J."/>
            <person name="Souciet J.-L."/>
            <person name="Steensma H.Y."/>
            <person name="Talla E."/>
            <person name="Thierry A."/>
            <person name="Vandenbol M."/>
            <person name="van der Aart Q.J.M."/>
            <person name="Van Dyck L."/>
            <person name="Vanoni M."/>
            <person name="Verhasselt P."/>
            <person name="Voet M."/>
            <person name="Volckaert G."/>
            <person name="Wambutt R."/>
            <person name="Watson M.D."/>
            <person name="Weber N."/>
            <person name="Wedler E."/>
            <person name="Wedler H."/>
            <person name="Wipfli P."/>
            <person name="Wolf K."/>
            <person name="Wright L.F."/>
            <person name="Zaccaria P."/>
            <person name="Zimmermann M."/>
            <person name="Zollner A."/>
            <person name="Kleine K."/>
        </authorList>
    </citation>
    <scope>NUCLEOTIDE SEQUENCE [LARGE SCALE GENOMIC DNA]</scope>
    <source>
        <strain>ATCC 204508 / S288c</strain>
    </source>
</reference>
<reference key="2">
    <citation type="journal article" date="2014" name="G3 (Bethesda)">
        <title>The reference genome sequence of Saccharomyces cerevisiae: Then and now.</title>
        <authorList>
            <person name="Engel S.R."/>
            <person name="Dietrich F.S."/>
            <person name="Fisk D.G."/>
            <person name="Binkley G."/>
            <person name="Balakrishnan R."/>
            <person name="Costanzo M.C."/>
            <person name="Dwight S.S."/>
            <person name="Hitz B.C."/>
            <person name="Karra K."/>
            <person name="Nash R.S."/>
            <person name="Weng S."/>
            <person name="Wong E.D."/>
            <person name="Lloyd P."/>
            <person name="Skrzypek M.S."/>
            <person name="Miyasato S.R."/>
            <person name="Simison M."/>
            <person name="Cherry J.M."/>
        </authorList>
    </citation>
    <scope>GENOME REANNOTATION</scope>
    <source>
        <strain>ATCC 204508 / S288c</strain>
    </source>
</reference>
<reference key="3">
    <citation type="journal article" date="2003" name="Nature">
        <title>Global analysis of protein localization in budding yeast.</title>
        <authorList>
            <person name="Huh W.-K."/>
            <person name="Falvo J.V."/>
            <person name="Gerke L.C."/>
            <person name="Carroll A.S."/>
            <person name="Howson R.W."/>
            <person name="Weissman J.S."/>
            <person name="O'Shea E.K."/>
        </authorList>
    </citation>
    <scope>SUBCELLULAR LOCATION [LARGE SCALE ANALYSIS]</scope>
</reference>
<reference key="4">
    <citation type="journal article" date="2007" name="Genome Res.">
        <title>Approaching a complete repository of sequence-verified protein-encoding clones for Saccharomyces cerevisiae.</title>
        <authorList>
            <person name="Hu Y."/>
            <person name="Rolfs A."/>
            <person name="Bhullar B."/>
            <person name="Murthy T.V.S."/>
            <person name="Zhu C."/>
            <person name="Berger M.F."/>
            <person name="Camargo A.A."/>
            <person name="Kelley F."/>
            <person name="McCarron S."/>
            <person name="Jepson D."/>
            <person name="Richardson A."/>
            <person name="Raphael J."/>
            <person name="Moreira D."/>
            <person name="Taycher E."/>
            <person name="Zuo D."/>
            <person name="Mohr S."/>
            <person name="Kane M.F."/>
            <person name="Williamson J."/>
            <person name="Simpson A.J.G."/>
            <person name="Bulyk M.L."/>
            <person name="Harlow E."/>
            <person name="Marsischky G."/>
            <person name="Kolodner R.D."/>
            <person name="LaBaer J."/>
        </authorList>
    </citation>
    <scope>NUCLEOTIDE SEQUENCE [GENOMIC DNA]</scope>
    <source>
        <strain>ATCC 204508 / S288c</strain>
    </source>
</reference>
<reference key="5">
    <citation type="journal article" date="2008" name="Genetics">
        <title>A genomewide suppressor and enhancer analysis of cdc13-1 reveals varied cellular processes influencing telomere capping in Saccharomyces cerevisiae.</title>
        <authorList>
            <person name="Addinall S.G."/>
            <person name="Downey M."/>
            <person name="Yu M."/>
            <person name="Zubko M.K."/>
            <person name="Dewar J."/>
            <person name="Leake A."/>
            <person name="Hallinan J."/>
            <person name="Shaw O."/>
            <person name="James K."/>
            <person name="Wilkinson D.J."/>
            <person name="Wipat A."/>
            <person name="Durocher D."/>
            <person name="Lydall D."/>
        </authorList>
    </citation>
    <scope>FUNCTION</scope>
</reference>
<reference key="6">
    <citation type="journal article" date="2003" name="Nature">
        <title>Global analysis of protein expression in yeast.</title>
        <authorList>
            <person name="Ghaemmaghami S."/>
            <person name="Huh W.-K."/>
            <person name="Bower K."/>
            <person name="Howson R.W."/>
            <person name="Belle A."/>
            <person name="Dephoure N."/>
            <person name="O'Shea E.K."/>
            <person name="Weissman J.S."/>
        </authorList>
    </citation>
    <scope>LEVEL OF PROTEIN EXPRESSION [LARGE SCALE ANALYSIS]</scope>
</reference>
<organism>
    <name type="scientific">Saccharomyces cerevisiae (strain ATCC 204508 / S288c)</name>
    <name type="common">Baker's yeast</name>
    <dbReference type="NCBI Taxonomy" id="559292"/>
    <lineage>
        <taxon>Eukaryota</taxon>
        <taxon>Fungi</taxon>
        <taxon>Dikarya</taxon>
        <taxon>Ascomycota</taxon>
        <taxon>Saccharomycotina</taxon>
        <taxon>Saccharomycetes</taxon>
        <taxon>Saccharomycetales</taxon>
        <taxon>Saccharomycetaceae</taxon>
        <taxon>Saccharomyces</taxon>
    </lineage>
</organism>
<feature type="transit peptide" description="Mitochondrion">
    <location>
        <begin position="1"/>
        <end position="37"/>
    </location>
</feature>
<feature type="chain" id="PRO_0000202714" description="Maintenance of telomere capping protein 3, mitochondrial">
    <location>
        <begin position="38"/>
        <end position="123"/>
    </location>
</feature>
<evidence type="ECO:0000269" key="1">
    <source>
    </source>
</evidence>
<evidence type="ECO:0000269" key="2">
    <source>
    </source>
</evidence>
<evidence type="ECO:0000269" key="3">
    <source>
    </source>
</evidence>
<protein>
    <recommendedName>
        <fullName>Maintenance of telomere capping protein 3, mitochondrial</fullName>
    </recommendedName>
</protein>
<dbReference type="EMBL" id="Z72748">
    <property type="protein sequence ID" value="CAA96942.1"/>
    <property type="molecule type" value="Genomic_DNA"/>
</dbReference>
<dbReference type="EMBL" id="AY558266">
    <property type="protein sequence ID" value="AAS56592.1"/>
    <property type="molecule type" value="Genomic_DNA"/>
</dbReference>
<dbReference type="EMBL" id="BK006941">
    <property type="protein sequence ID" value="DAA07893.1"/>
    <property type="molecule type" value="Genomic_DNA"/>
</dbReference>
<dbReference type="PIR" id="S64248">
    <property type="entry name" value="S64248"/>
</dbReference>
<dbReference type="RefSeq" id="NP_011289.1">
    <property type="nucleotide sequence ID" value="NM_001181092.1"/>
</dbReference>
<dbReference type="SMR" id="P53077"/>
<dbReference type="BioGRID" id="33014">
    <property type="interactions" value="135"/>
</dbReference>
<dbReference type="DIP" id="DIP-4725N"/>
<dbReference type="FunCoup" id="P53077">
    <property type="interactions" value="35"/>
</dbReference>
<dbReference type="IntAct" id="P53077">
    <property type="interactions" value="2"/>
</dbReference>
<dbReference type="MINT" id="P53077"/>
<dbReference type="STRING" id="4932.YGL226W"/>
<dbReference type="PaxDb" id="4932-YGL226W"/>
<dbReference type="PeptideAtlas" id="P53077"/>
<dbReference type="EnsemblFungi" id="YGL226W_mRNA">
    <property type="protein sequence ID" value="YGL226W"/>
    <property type="gene ID" value="YGL226W"/>
</dbReference>
<dbReference type="GeneID" id="852626"/>
<dbReference type="KEGG" id="sce:YGL226W"/>
<dbReference type="AGR" id="SGD:S000003195"/>
<dbReference type="SGD" id="S000003195">
    <property type="gene designation" value="MTC3"/>
</dbReference>
<dbReference type="VEuPathDB" id="FungiDB:YGL226W"/>
<dbReference type="eggNOG" id="KOG4075">
    <property type="taxonomic scope" value="Eukaryota"/>
</dbReference>
<dbReference type="HOGENOM" id="CLU_148802_0_0_1"/>
<dbReference type="InParanoid" id="P53077"/>
<dbReference type="OMA" id="YLDWKME"/>
<dbReference type="OrthoDB" id="186013at2759"/>
<dbReference type="BioCyc" id="YEAST:G3O-30700-MONOMER"/>
<dbReference type="BioGRID-ORCS" id="852626">
    <property type="hits" value="7 hits in 10 CRISPR screens"/>
</dbReference>
<dbReference type="PRO" id="PR:P53077"/>
<dbReference type="Proteomes" id="UP000002311">
    <property type="component" value="Chromosome VII"/>
</dbReference>
<dbReference type="RNAct" id="P53077">
    <property type="molecule type" value="protein"/>
</dbReference>
<dbReference type="GO" id="GO:0005739">
    <property type="term" value="C:mitochondrion"/>
    <property type="evidence" value="ECO:0007005"/>
    <property type="project" value="SGD"/>
</dbReference>
<dbReference type="GO" id="GO:0045277">
    <property type="term" value="C:respiratory chain complex IV"/>
    <property type="evidence" value="ECO:0000318"/>
    <property type="project" value="GO_Central"/>
</dbReference>
<dbReference type="GO" id="GO:0006123">
    <property type="term" value="P:mitochondrial electron transport, cytochrome c to oxygen"/>
    <property type="evidence" value="ECO:0000318"/>
    <property type="project" value="GO_Central"/>
</dbReference>
<dbReference type="Gene3D" id="1.10.442.10">
    <property type="entry name" value="Cytochrome c oxidase subunit IV"/>
    <property type="match status" value="1"/>
</dbReference>
<dbReference type="InterPro" id="IPR004203">
    <property type="entry name" value="Cyt_c_oxidase_su4_fam"/>
</dbReference>
<dbReference type="InterPro" id="IPR036639">
    <property type="entry name" value="Cyt_c_oxidase_su4_sf"/>
</dbReference>
<dbReference type="Pfam" id="PF02936">
    <property type="entry name" value="COX4"/>
    <property type="match status" value="1"/>
</dbReference>
<dbReference type="SUPFAM" id="SSF81406">
    <property type="entry name" value="Mitochondrial cytochrome c oxidase subunit IV"/>
    <property type="match status" value="1"/>
</dbReference>
<keyword id="KW-0496">Mitochondrion</keyword>
<keyword id="KW-1185">Reference proteome</keyword>
<keyword id="KW-0809">Transit peptide</keyword>
<sequence>MMGRNGIRLALKRSFSTYQPPVVEITNITKLWPTLRPEVRDEIKEYLRWRMQEDWRHIPLEETKAAYFLSYGPCGGRSKGNEWNVGYTGMRIVFNLVLFGGAATAFYNWKQDKKLEEQLRDLV</sequence>
<name>MTC3_YEAST</name>
<comment type="function">
    <text evidence="3">May be involved in telomere capping.</text>
</comment>
<comment type="subcellular location">
    <subcellularLocation>
        <location evidence="1">Mitochondrion</location>
    </subcellularLocation>
</comment>
<comment type="miscellaneous">
    <text evidence="2">Present with 1170 molecules/cell in log phase SD medium.</text>
</comment>
<accession>P53077</accession>
<accession>D6VVA9</accession>
<proteinExistence type="evidence at protein level"/>